<feature type="chain" id="PRO_0000427293" description="Transcriptional regulator BlaI">
    <location>
        <begin position="1"/>
        <end position="138"/>
    </location>
</feature>
<feature type="DNA-binding region" description="H-T-H motif">
    <location>
        <begin position="6"/>
        <end position="71"/>
    </location>
</feature>
<feature type="region of interest" description="Important for dimerization" evidence="1">
    <location>
        <begin position="74"/>
        <end position="138"/>
    </location>
</feature>
<feature type="site" description="Cleavage" evidence="2">
    <location>
        <begin position="102"/>
        <end position="103"/>
    </location>
</feature>
<keyword id="KW-0046">Antibiotic resistance</keyword>
<keyword id="KW-0963">Cytoplasm</keyword>
<keyword id="KW-0238">DNA-binding</keyword>
<keyword id="KW-1185">Reference proteome</keyword>
<keyword id="KW-0678">Repressor</keyword>
<keyword id="KW-0804">Transcription</keyword>
<keyword id="KW-0805">Transcription regulation</keyword>
<comment type="function">
    <text evidence="1">Transcription regulator that regulates genes involved in antibiotic transport, detoxification and cell wall function. Also regulates its own transcription. Binds DNA as a dimer (By similarity).</text>
</comment>
<comment type="subunit">
    <text evidence="1">Homodimer.</text>
</comment>
<comment type="subcellular location">
    <subcellularLocation>
        <location evidence="1">Cytoplasm</location>
    </subcellularLocation>
</comment>
<comment type="PTM">
    <text evidence="1">Upon exposure to beta-lactams, proteolytic cleavage at a single site may impair dimerization and abolish repressor activity.</text>
</comment>
<comment type="similarity">
    <text evidence="3">Belongs to the BlaI transcriptional regulatory family.</text>
</comment>
<gene>
    <name type="primary">blaI</name>
    <name type="ordered locus">MT1894</name>
</gene>
<dbReference type="EMBL" id="AE000516">
    <property type="protein sequence ID" value="AAK46165.1"/>
    <property type="molecule type" value="Genomic_DNA"/>
</dbReference>
<dbReference type="PIR" id="F70664">
    <property type="entry name" value="F70664"/>
</dbReference>
<dbReference type="RefSeq" id="WP_003409301.1">
    <property type="nucleotide sequence ID" value="NZ_KK341227.1"/>
</dbReference>
<dbReference type="SMR" id="P9WMJ4"/>
<dbReference type="GeneID" id="45425819"/>
<dbReference type="KEGG" id="mtc:MT1894"/>
<dbReference type="PATRIC" id="fig|83331.31.peg.2038"/>
<dbReference type="HOGENOM" id="CLU_119090_1_0_11"/>
<dbReference type="Proteomes" id="UP000001020">
    <property type="component" value="Chromosome"/>
</dbReference>
<dbReference type="GO" id="GO:0005737">
    <property type="term" value="C:cytoplasm"/>
    <property type="evidence" value="ECO:0007669"/>
    <property type="project" value="UniProtKB-SubCell"/>
</dbReference>
<dbReference type="GO" id="GO:0003677">
    <property type="term" value="F:DNA binding"/>
    <property type="evidence" value="ECO:0007669"/>
    <property type="project" value="UniProtKB-KW"/>
</dbReference>
<dbReference type="GO" id="GO:0045892">
    <property type="term" value="P:negative regulation of DNA-templated transcription"/>
    <property type="evidence" value="ECO:0007669"/>
    <property type="project" value="InterPro"/>
</dbReference>
<dbReference type="GO" id="GO:0046677">
    <property type="term" value="P:response to antibiotic"/>
    <property type="evidence" value="ECO:0007669"/>
    <property type="project" value="UniProtKB-KW"/>
</dbReference>
<dbReference type="FunFam" id="1.10.10.10:FF:000348">
    <property type="entry name" value="Transcriptional regulator BlaI"/>
    <property type="match status" value="1"/>
</dbReference>
<dbReference type="Gene3D" id="6.10.140.850">
    <property type="match status" value="1"/>
</dbReference>
<dbReference type="Gene3D" id="1.10.10.10">
    <property type="entry name" value="Winged helix-like DNA-binding domain superfamily/Winged helix DNA-binding domain"/>
    <property type="match status" value="1"/>
</dbReference>
<dbReference type="InterPro" id="IPR005650">
    <property type="entry name" value="BlaI_family"/>
</dbReference>
<dbReference type="InterPro" id="IPR036388">
    <property type="entry name" value="WH-like_DNA-bd_sf"/>
</dbReference>
<dbReference type="InterPro" id="IPR036390">
    <property type="entry name" value="WH_DNA-bd_sf"/>
</dbReference>
<dbReference type="Pfam" id="PF03965">
    <property type="entry name" value="Penicillinase_R"/>
    <property type="match status" value="1"/>
</dbReference>
<dbReference type="PIRSF" id="PIRSF019455">
    <property type="entry name" value="CopR_AtkY"/>
    <property type="match status" value="1"/>
</dbReference>
<dbReference type="SUPFAM" id="SSF46785">
    <property type="entry name" value="Winged helix' DNA-binding domain"/>
    <property type="match status" value="1"/>
</dbReference>
<proteinExistence type="inferred from homology"/>
<name>BLAI_MYCTO</name>
<protein>
    <recommendedName>
        <fullName>Transcriptional regulator BlaI</fullName>
    </recommendedName>
</protein>
<sequence>MAKLTRLGDLERAVMDHLWSRTEPQTVRQVHEALSARRDLAYTTVMTVLQRLAKKNLVLQIRDDRAHRYAPVHGRDELVAGLMVDALAQAEDSGSRQAALVHFVERVGADEADALRRALAELEAGHGNRPPAGAATET</sequence>
<organism>
    <name type="scientific">Mycobacterium tuberculosis (strain CDC 1551 / Oshkosh)</name>
    <dbReference type="NCBI Taxonomy" id="83331"/>
    <lineage>
        <taxon>Bacteria</taxon>
        <taxon>Bacillati</taxon>
        <taxon>Actinomycetota</taxon>
        <taxon>Actinomycetes</taxon>
        <taxon>Mycobacteriales</taxon>
        <taxon>Mycobacteriaceae</taxon>
        <taxon>Mycobacterium</taxon>
        <taxon>Mycobacterium tuberculosis complex</taxon>
    </lineage>
</organism>
<accession>P9WMJ4</accession>
<accession>L0T7V6</accession>
<accession>P95163</accession>
<accession>Q7D7W9</accession>
<reference key="1">
    <citation type="journal article" date="2002" name="J. Bacteriol.">
        <title>Whole-genome comparison of Mycobacterium tuberculosis clinical and laboratory strains.</title>
        <authorList>
            <person name="Fleischmann R.D."/>
            <person name="Alland D."/>
            <person name="Eisen J.A."/>
            <person name="Carpenter L."/>
            <person name="White O."/>
            <person name="Peterson J.D."/>
            <person name="DeBoy R.T."/>
            <person name="Dodson R.J."/>
            <person name="Gwinn M.L."/>
            <person name="Haft D.H."/>
            <person name="Hickey E.K."/>
            <person name="Kolonay J.F."/>
            <person name="Nelson W.C."/>
            <person name="Umayam L.A."/>
            <person name="Ermolaeva M.D."/>
            <person name="Salzberg S.L."/>
            <person name="Delcher A."/>
            <person name="Utterback T.R."/>
            <person name="Weidman J.F."/>
            <person name="Khouri H.M."/>
            <person name="Gill J."/>
            <person name="Mikula A."/>
            <person name="Bishai W."/>
            <person name="Jacobs W.R. Jr."/>
            <person name="Venter J.C."/>
            <person name="Fraser C.M."/>
        </authorList>
    </citation>
    <scope>NUCLEOTIDE SEQUENCE [LARGE SCALE GENOMIC DNA]</scope>
    <source>
        <strain>CDC 1551 / Oshkosh</strain>
    </source>
</reference>
<evidence type="ECO:0000250" key="1"/>
<evidence type="ECO:0000255" key="2"/>
<evidence type="ECO:0000305" key="3"/>